<proteinExistence type="inferred from homology"/>
<sequence length="283" mass="31756">MTKVIQTVSEMQQITQELKSTGKTIGFVPTMGALHEGHLSMMRRSVEENDITVISVFVNPLQFGPNEDFDAYPRQIDQDVALVEAINVDYVFHPAVEEMYPNELSVTLKVGRLAEVLEGAQRPGHFDGVVTVLNKLFNIVSPNKAYFGKKDAQQLAIVEKMVEDFNHPIQIVGIDIVREEDGLARSSRNVYLTDDERQEAVHLSKSLEIAQTLYKQGERRSHIIVGEIKTYLSEHTSGHIDEVAIYSYPDLEVATEIQGQIFISLAVKFSKARLIDNIILGSE</sequence>
<name>PANC_STAHJ</name>
<dbReference type="EC" id="6.3.2.1" evidence="1"/>
<dbReference type="EMBL" id="AP006716">
    <property type="protein sequence ID" value="BAE03491.1"/>
    <property type="molecule type" value="Genomic_DNA"/>
</dbReference>
<dbReference type="RefSeq" id="WP_011274511.1">
    <property type="nucleotide sequence ID" value="NC_007168.1"/>
</dbReference>
<dbReference type="SMR" id="Q4LA34"/>
<dbReference type="GeneID" id="93779622"/>
<dbReference type="KEGG" id="sha:SH0182"/>
<dbReference type="eggNOG" id="COG0414">
    <property type="taxonomic scope" value="Bacteria"/>
</dbReference>
<dbReference type="HOGENOM" id="CLU_047148_0_0_9"/>
<dbReference type="OrthoDB" id="9773087at2"/>
<dbReference type="UniPathway" id="UPA00028">
    <property type="reaction ID" value="UER00005"/>
</dbReference>
<dbReference type="Proteomes" id="UP000000543">
    <property type="component" value="Chromosome"/>
</dbReference>
<dbReference type="GO" id="GO:0005829">
    <property type="term" value="C:cytosol"/>
    <property type="evidence" value="ECO:0007669"/>
    <property type="project" value="TreeGrafter"/>
</dbReference>
<dbReference type="GO" id="GO:0005524">
    <property type="term" value="F:ATP binding"/>
    <property type="evidence" value="ECO:0007669"/>
    <property type="project" value="UniProtKB-KW"/>
</dbReference>
<dbReference type="GO" id="GO:0004592">
    <property type="term" value="F:pantoate-beta-alanine ligase activity"/>
    <property type="evidence" value="ECO:0007669"/>
    <property type="project" value="UniProtKB-UniRule"/>
</dbReference>
<dbReference type="GO" id="GO:0015940">
    <property type="term" value="P:pantothenate biosynthetic process"/>
    <property type="evidence" value="ECO:0007669"/>
    <property type="project" value="UniProtKB-UniRule"/>
</dbReference>
<dbReference type="CDD" id="cd00560">
    <property type="entry name" value="PanC"/>
    <property type="match status" value="1"/>
</dbReference>
<dbReference type="FunFam" id="3.30.1300.10:FF:000001">
    <property type="entry name" value="Pantothenate synthetase"/>
    <property type="match status" value="1"/>
</dbReference>
<dbReference type="FunFam" id="3.40.50.620:FF:000013">
    <property type="entry name" value="Pantothenate synthetase"/>
    <property type="match status" value="1"/>
</dbReference>
<dbReference type="Gene3D" id="3.40.50.620">
    <property type="entry name" value="HUPs"/>
    <property type="match status" value="1"/>
</dbReference>
<dbReference type="Gene3D" id="3.30.1300.10">
    <property type="entry name" value="Pantoate-beta-alanine ligase, C-terminal domain"/>
    <property type="match status" value="1"/>
</dbReference>
<dbReference type="HAMAP" id="MF_00158">
    <property type="entry name" value="PanC"/>
    <property type="match status" value="1"/>
</dbReference>
<dbReference type="InterPro" id="IPR004821">
    <property type="entry name" value="Cyt_trans-like"/>
</dbReference>
<dbReference type="InterPro" id="IPR003721">
    <property type="entry name" value="Pantoate_ligase"/>
</dbReference>
<dbReference type="InterPro" id="IPR042176">
    <property type="entry name" value="Pantoate_ligase_C"/>
</dbReference>
<dbReference type="InterPro" id="IPR014729">
    <property type="entry name" value="Rossmann-like_a/b/a_fold"/>
</dbReference>
<dbReference type="NCBIfam" id="TIGR00125">
    <property type="entry name" value="cyt_tran_rel"/>
    <property type="match status" value="1"/>
</dbReference>
<dbReference type="NCBIfam" id="TIGR00018">
    <property type="entry name" value="panC"/>
    <property type="match status" value="1"/>
</dbReference>
<dbReference type="PANTHER" id="PTHR21299">
    <property type="entry name" value="CYTIDYLATE KINASE/PANTOATE-BETA-ALANINE LIGASE"/>
    <property type="match status" value="1"/>
</dbReference>
<dbReference type="PANTHER" id="PTHR21299:SF1">
    <property type="entry name" value="PANTOATE--BETA-ALANINE LIGASE"/>
    <property type="match status" value="1"/>
</dbReference>
<dbReference type="Pfam" id="PF02569">
    <property type="entry name" value="Pantoate_ligase"/>
    <property type="match status" value="1"/>
</dbReference>
<dbReference type="SUPFAM" id="SSF52374">
    <property type="entry name" value="Nucleotidylyl transferase"/>
    <property type="match status" value="1"/>
</dbReference>
<gene>
    <name evidence="1" type="primary">panC</name>
    <name type="ordered locus">SH0182</name>
</gene>
<organism>
    <name type="scientific">Staphylococcus haemolyticus (strain JCSC1435)</name>
    <dbReference type="NCBI Taxonomy" id="279808"/>
    <lineage>
        <taxon>Bacteria</taxon>
        <taxon>Bacillati</taxon>
        <taxon>Bacillota</taxon>
        <taxon>Bacilli</taxon>
        <taxon>Bacillales</taxon>
        <taxon>Staphylococcaceae</taxon>
        <taxon>Staphylococcus</taxon>
    </lineage>
</organism>
<reference key="1">
    <citation type="journal article" date="2005" name="J. Bacteriol.">
        <title>Whole-genome sequencing of Staphylococcus haemolyticus uncovers the extreme plasticity of its genome and the evolution of human-colonizing staphylococcal species.</title>
        <authorList>
            <person name="Takeuchi F."/>
            <person name="Watanabe S."/>
            <person name="Baba T."/>
            <person name="Yuzawa H."/>
            <person name="Ito T."/>
            <person name="Morimoto Y."/>
            <person name="Kuroda M."/>
            <person name="Cui L."/>
            <person name="Takahashi M."/>
            <person name="Ankai A."/>
            <person name="Baba S."/>
            <person name="Fukui S."/>
            <person name="Lee J.C."/>
            <person name="Hiramatsu K."/>
        </authorList>
    </citation>
    <scope>NUCLEOTIDE SEQUENCE [LARGE SCALE GENOMIC DNA]</scope>
    <source>
        <strain>JCSC1435</strain>
    </source>
</reference>
<keyword id="KW-0067">ATP-binding</keyword>
<keyword id="KW-0963">Cytoplasm</keyword>
<keyword id="KW-0436">Ligase</keyword>
<keyword id="KW-0547">Nucleotide-binding</keyword>
<keyword id="KW-0566">Pantothenate biosynthesis</keyword>
<comment type="function">
    <text evidence="1">Catalyzes the condensation of pantoate with beta-alanine in an ATP-dependent reaction via a pantoyl-adenylate intermediate.</text>
</comment>
<comment type="catalytic activity">
    <reaction evidence="1">
        <text>(R)-pantoate + beta-alanine + ATP = (R)-pantothenate + AMP + diphosphate + H(+)</text>
        <dbReference type="Rhea" id="RHEA:10912"/>
        <dbReference type="ChEBI" id="CHEBI:15378"/>
        <dbReference type="ChEBI" id="CHEBI:15980"/>
        <dbReference type="ChEBI" id="CHEBI:29032"/>
        <dbReference type="ChEBI" id="CHEBI:30616"/>
        <dbReference type="ChEBI" id="CHEBI:33019"/>
        <dbReference type="ChEBI" id="CHEBI:57966"/>
        <dbReference type="ChEBI" id="CHEBI:456215"/>
        <dbReference type="EC" id="6.3.2.1"/>
    </reaction>
</comment>
<comment type="pathway">
    <text evidence="1">Cofactor biosynthesis; (R)-pantothenate biosynthesis; (R)-pantothenate from (R)-pantoate and beta-alanine: step 1/1.</text>
</comment>
<comment type="subunit">
    <text evidence="1">Homodimer.</text>
</comment>
<comment type="subcellular location">
    <subcellularLocation>
        <location evidence="1">Cytoplasm</location>
    </subcellularLocation>
</comment>
<comment type="miscellaneous">
    <text evidence="1">The reaction proceeds by a bi uni uni bi ping pong mechanism.</text>
</comment>
<comment type="similarity">
    <text evidence="1">Belongs to the pantothenate synthetase family.</text>
</comment>
<protein>
    <recommendedName>
        <fullName evidence="1">Pantothenate synthetase</fullName>
        <shortName evidence="1">PS</shortName>
        <ecNumber evidence="1">6.3.2.1</ecNumber>
    </recommendedName>
    <alternativeName>
        <fullName evidence="1">Pantoate--beta-alanine ligase</fullName>
    </alternativeName>
    <alternativeName>
        <fullName evidence="1">Pantoate-activating enzyme</fullName>
    </alternativeName>
</protein>
<evidence type="ECO:0000255" key="1">
    <source>
        <dbReference type="HAMAP-Rule" id="MF_00158"/>
    </source>
</evidence>
<feature type="chain" id="PRO_0000128277" description="Pantothenate synthetase">
    <location>
        <begin position="1"/>
        <end position="283"/>
    </location>
</feature>
<feature type="active site" description="Proton donor" evidence="1">
    <location>
        <position position="38"/>
    </location>
</feature>
<feature type="binding site" evidence="1">
    <location>
        <begin position="31"/>
        <end position="38"/>
    </location>
    <ligand>
        <name>ATP</name>
        <dbReference type="ChEBI" id="CHEBI:30616"/>
    </ligand>
</feature>
<feature type="binding site" evidence="1">
    <location>
        <position position="62"/>
    </location>
    <ligand>
        <name>(R)-pantoate</name>
        <dbReference type="ChEBI" id="CHEBI:15980"/>
    </ligand>
</feature>
<feature type="binding site" evidence="1">
    <location>
        <position position="62"/>
    </location>
    <ligand>
        <name>beta-alanine</name>
        <dbReference type="ChEBI" id="CHEBI:57966"/>
    </ligand>
</feature>
<feature type="binding site" evidence="1">
    <location>
        <begin position="148"/>
        <end position="151"/>
    </location>
    <ligand>
        <name>ATP</name>
        <dbReference type="ChEBI" id="CHEBI:30616"/>
    </ligand>
</feature>
<feature type="binding site" evidence="1">
    <location>
        <position position="154"/>
    </location>
    <ligand>
        <name>(R)-pantoate</name>
        <dbReference type="ChEBI" id="CHEBI:15980"/>
    </ligand>
</feature>
<feature type="binding site" evidence="1">
    <location>
        <position position="177"/>
    </location>
    <ligand>
        <name>ATP</name>
        <dbReference type="ChEBI" id="CHEBI:30616"/>
    </ligand>
</feature>
<feature type="binding site" evidence="1">
    <location>
        <begin position="185"/>
        <end position="188"/>
    </location>
    <ligand>
        <name>ATP</name>
        <dbReference type="ChEBI" id="CHEBI:30616"/>
    </ligand>
</feature>
<accession>Q4LA34</accession>